<organism>
    <name type="scientific">Lithobates berlandieri</name>
    <name type="common">Rio Grande leopard frog</name>
    <name type="synonym">Rana berlandieri</name>
    <dbReference type="NCBI Taxonomy" id="30360"/>
    <lineage>
        <taxon>Eukaryota</taxon>
        <taxon>Metazoa</taxon>
        <taxon>Chordata</taxon>
        <taxon>Craniata</taxon>
        <taxon>Vertebrata</taxon>
        <taxon>Euteleostomi</taxon>
        <taxon>Amphibia</taxon>
        <taxon>Batrachia</taxon>
        <taxon>Anura</taxon>
        <taxon>Neobatrachia</taxon>
        <taxon>Ranoidea</taxon>
        <taxon>Ranidae</taxon>
        <taxon>Lithobates</taxon>
    </lineage>
</organism>
<sequence>FLPAIAGVAAKFLPKIFCAISKKC</sequence>
<dbReference type="GO" id="GO:0005576">
    <property type="term" value="C:extracellular region"/>
    <property type="evidence" value="ECO:0007669"/>
    <property type="project" value="UniProtKB-SubCell"/>
</dbReference>
<dbReference type="GO" id="GO:0042742">
    <property type="term" value="P:defense response to bacterium"/>
    <property type="evidence" value="ECO:0007669"/>
    <property type="project" value="UniProtKB-KW"/>
</dbReference>
<dbReference type="GO" id="GO:0050832">
    <property type="term" value="P:defense response to fungus"/>
    <property type="evidence" value="ECO:0007669"/>
    <property type="project" value="UniProtKB-KW"/>
</dbReference>
<dbReference type="GO" id="GO:0031640">
    <property type="term" value="P:killing of cells of another organism"/>
    <property type="evidence" value="ECO:0007669"/>
    <property type="project" value="UniProtKB-KW"/>
</dbReference>
<dbReference type="InterPro" id="IPR012520">
    <property type="entry name" value="Antimicrobial_frog_1"/>
</dbReference>
<dbReference type="Pfam" id="PF08018">
    <property type="entry name" value="Antimicrobial_1"/>
    <property type="match status" value="1"/>
</dbReference>
<name>BR1D_LITBE</name>
<accession>P82836</accession>
<feature type="peptide" id="PRO_0000043529" description="Brevinin-1Bd">
    <location>
        <begin position="1"/>
        <end position="24"/>
    </location>
</feature>
<feature type="disulfide bond" evidence="1">
    <location>
        <begin position="18"/>
        <end position="24"/>
    </location>
</feature>
<keyword id="KW-0878">Amphibian defense peptide</keyword>
<keyword id="KW-0044">Antibiotic</keyword>
<keyword id="KW-0929">Antimicrobial</keyword>
<keyword id="KW-0903">Direct protein sequencing</keyword>
<keyword id="KW-1015">Disulfide bond</keyword>
<keyword id="KW-0295">Fungicide</keyword>
<keyword id="KW-0964">Secreted</keyword>
<proteinExistence type="evidence at protein level"/>
<evidence type="ECO:0000250" key="1"/>
<evidence type="ECO:0000269" key="2">
    <source>
    </source>
</evidence>
<evidence type="ECO:0000305" key="3"/>
<protein>
    <recommendedName>
        <fullName>Brevinin-1Bd</fullName>
    </recommendedName>
</protein>
<reference key="1">
    <citation type="journal article" date="2000" name="Eur. J. Biochem.">
        <title>Peptides with antimicrobial activity from four different families isolated from the skins of the North American frogs Rana luteiventris, Rana berlandieri and Rana pipiens.</title>
        <authorList>
            <person name="Goraya J."/>
            <person name="Wang Y."/>
            <person name="Li Z."/>
            <person name="O'Flaherty M."/>
            <person name="Knoop F.C."/>
            <person name="Platz J.E."/>
            <person name="Conlon J.M."/>
        </authorList>
    </citation>
    <scope>PROTEIN SEQUENCE</scope>
    <scope>FUNCTION</scope>
    <scope>MASS SPECTROMETRY</scope>
    <source>
        <tissue>Skin secretion</tissue>
    </source>
</reference>
<comment type="function">
    <text evidence="2">Antibacterial activity against Gram-positive bacterium S.aureus and Gram-negative bacterium E.coli. Has activity against C.albicans.</text>
</comment>
<comment type="subcellular location">
    <subcellularLocation>
        <location>Secreted</location>
    </subcellularLocation>
</comment>
<comment type="tissue specificity">
    <text>Expressed by the skin glands.</text>
</comment>
<comment type="mass spectrometry"/>
<comment type="similarity">
    <text evidence="3">Belongs to the frog skin active peptide (FSAP) family. Brevinin subfamily.</text>
</comment>